<keyword id="KW-0028">Amino-acid biosynthesis</keyword>
<keyword id="KW-0055">Arginine biosynthesis</keyword>
<keyword id="KW-0170">Cobalt</keyword>
<keyword id="KW-0963">Cytoplasm</keyword>
<keyword id="KW-0378">Hydrolase</keyword>
<keyword id="KW-0479">Metal-binding</keyword>
<keyword id="KW-1185">Reference proteome</keyword>
<keyword id="KW-0862">Zinc</keyword>
<evidence type="ECO:0000255" key="1">
    <source>
        <dbReference type="HAMAP-Rule" id="MF_01108"/>
    </source>
</evidence>
<evidence type="ECO:0000305" key="2"/>
<accession>Q8X742</accession>
<feature type="chain" id="PRO_0000185241" description="Acetylornithine deacetylase">
    <location>
        <begin position="1"/>
        <end position="383"/>
    </location>
</feature>
<feature type="active site" evidence="1">
    <location>
        <position position="82"/>
    </location>
</feature>
<feature type="active site" evidence="1">
    <location>
        <position position="144"/>
    </location>
</feature>
<feature type="binding site" evidence="1">
    <location>
        <position position="80"/>
    </location>
    <ligand>
        <name>Zn(2+)</name>
        <dbReference type="ChEBI" id="CHEBI:29105"/>
        <label>1</label>
    </ligand>
</feature>
<feature type="binding site" evidence="1">
    <location>
        <position position="112"/>
    </location>
    <ligand>
        <name>Zn(2+)</name>
        <dbReference type="ChEBI" id="CHEBI:29105"/>
        <label>1</label>
    </ligand>
</feature>
<feature type="binding site" evidence="1">
    <location>
        <position position="112"/>
    </location>
    <ligand>
        <name>Zn(2+)</name>
        <dbReference type="ChEBI" id="CHEBI:29105"/>
        <label>2</label>
    </ligand>
</feature>
<feature type="binding site" evidence="1">
    <location>
        <position position="145"/>
    </location>
    <ligand>
        <name>Zn(2+)</name>
        <dbReference type="ChEBI" id="CHEBI:29105"/>
        <label>2</label>
    </ligand>
</feature>
<feature type="binding site" evidence="1">
    <location>
        <position position="169"/>
    </location>
    <ligand>
        <name>Zn(2+)</name>
        <dbReference type="ChEBI" id="CHEBI:29105"/>
        <label>1</label>
    </ligand>
</feature>
<feature type="binding site" evidence="1">
    <location>
        <position position="355"/>
    </location>
    <ligand>
        <name>Zn(2+)</name>
        <dbReference type="ChEBI" id="CHEBI:29105"/>
        <label>2</label>
    </ligand>
</feature>
<gene>
    <name evidence="1" type="primary">argE</name>
    <name type="ordered locus">Z5515</name>
    <name type="ordered locus">ECs4886</name>
</gene>
<protein>
    <recommendedName>
        <fullName evidence="1">Acetylornithine deacetylase</fullName>
        <shortName evidence="1">AO</shortName>
        <shortName evidence="1">Acetylornithinase</shortName>
        <ecNumber evidence="1">3.5.1.16</ecNumber>
    </recommendedName>
    <alternativeName>
        <fullName evidence="1">N-acetylornithinase</fullName>
        <shortName evidence="1">NAO</shortName>
    </alternativeName>
</protein>
<comment type="function">
    <text evidence="1">Catalyzes the hydrolysis of the amide bond of N(2)-acetylated L-amino acids. Cleaves the acetyl group from N-acetyl-L-ornithine to form L-ornithine, an intermediate in L-arginine biosynthesis pathway, and a branchpoint in the synthesis of polyamines.</text>
</comment>
<comment type="catalytic activity">
    <reaction evidence="1">
        <text>N(2)-acetyl-L-ornithine + H2O = L-ornithine + acetate</text>
        <dbReference type="Rhea" id="RHEA:15941"/>
        <dbReference type="ChEBI" id="CHEBI:15377"/>
        <dbReference type="ChEBI" id="CHEBI:30089"/>
        <dbReference type="ChEBI" id="CHEBI:46911"/>
        <dbReference type="ChEBI" id="CHEBI:57805"/>
        <dbReference type="EC" id="3.5.1.16"/>
    </reaction>
</comment>
<comment type="cofactor">
    <cofactor evidence="1">
        <name>Zn(2+)</name>
        <dbReference type="ChEBI" id="CHEBI:29105"/>
    </cofactor>
    <cofactor evidence="1">
        <name>Co(2+)</name>
        <dbReference type="ChEBI" id="CHEBI:48828"/>
    </cofactor>
    <text evidence="1">Binds 2 Zn(2+) or Co(2+) ions per subunit.</text>
</comment>
<comment type="cofactor">
    <cofactor evidence="1">
        <name>glutathione</name>
        <dbReference type="ChEBI" id="CHEBI:57925"/>
    </cofactor>
</comment>
<comment type="pathway">
    <text evidence="1">Amino-acid biosynthesis; L-arginine biosynthesis; L-ornithine from N(2)-acetyl-L-ornithine (linear): step 1/1.</text>
</comment>
<comment type="subunit">
    <text evidence="1">Homodimer.</text>
</comment>
<comment type="subcellular location">
    <subcellularLocation>
        <location evidence="1">Cytoplasm</location>
    </subcellularLocation>
</comment>
<comment type="similarity">
    <text evidence="1 2">Belongs to the peptidase M20A family. ArgE subfamily.</text>
</comment>
<organism>
    <name type="scientific">Escherichia coli O157:H7</name>
    <dbReference type="NCBI Taxonomy" id="83334"/>
    <lineage>
        <taxon>Bacteria</taxon>
        <taxon>Pseudomonadati</taxon>
        <taxon>Pseudomonadota</taxon>
        <taxon>Gammaproteobacteria</taxon>
        <taxon>Enterobacterales</taxon>
        <taxon>Enterobacteriaceae</taxon>
        <taxon>Escherichia</taxon>
    </lineage>
</organism>
<sequence>MKNKLPPFIEIYRALIATPSISATEEALDQSNADLITLLADWFKDLGFNVEVQPVPGTRNKFNMLASTGQGAGGLLLAGHTDTVPFDDGRWTRDPFTLTEHDGKLYGLGTADMKGFFAFILDALRDVDVTKLKKPLYILATADEETSMAGARYFAETTALRPDCAIIGEPTSLQPVRAHKGHISNAIRIQGQSGHSSDPARGVNAIELMHDAIGHILQLRDNLKERYHYEAFTVPYPTLNLGHIHGGDASNRICAWCELHMDIRPLPGMTLNELNGLLNDALAPVSERWPGRLTVDELHPPIPGYECPPNHQLVEVVEKLLGAKTEVVNYCTEAPFIQTLCPTLVLGPGSINQAHQPDEYLETRFIKPTRELITQVIHHFCWH</sequence>
<dbReference type="EC" id="3.5.1.16" evidence="1"/>
<dbReference type="EMBL" id="AE005174">
    <property type="protein sequence ID" value="AAG59159.1"/>
    <property type="molecule type" value="Genomic_DNA"/>
</dbReference>
<dbReference type="EMBL" id="BA000007">
    <property type="protein sequence ID" value="BAB38309.1"/>
    <property type="molecule type" value="Genomic_DNA"/>
</dbReference>
<dbReference type="PIR" id="C86087">
    <property type="entry name" value="C86087"/>
</dbReference>
<dbReference type="PIR" id="F91239">
    <property type="entry name" value="F91239"/>
</dbReference>
<dbReference type="RefSeq" id="NP_312913.1">
    <property type="nucleotide sequence ID" value="NC_002695.1"/>
</dbReference>
<dbReference type="RefSeq" id="WP_001301638.1">
    <property type="nucleotide sequence ID" value="NZ_VOAI01000032.1"/>
</dbReference>
<dbReference type="SMR" id="Q8X742"/>
<dbReference type="STRING" id="155864.Z5515"/>
<dbReference type="MEROPS" id="M20.974"/>
<dbReference type="GeneID" id="914989"/>
<dbReference type="KEGG" id="ece:Z5515"/>
<dbReference type="KEGG" id="ecs:ECs_4886"/>
<dbReference type="PATRIC" id="fig|386585.9.peg.5110"/>
<dbReference type="eggNOG" id="COG0624">
    <property type="taxonomic scope" value="Bacteria"/>
</dbReference>
<dbReference type="HOGENOM" id="CLU_021802_2_4_6"/>
<dbReference type="OMA" id="RLHKGVM"/>
<dbReference type="UniPathway" id="UPA00068">
    <property type="reaction ID" value="UER00110"/>
</dbReference>
<dbReference type="Proteomes" id="UP000000558">
    <property type="component" value="Chromosome"/>
</dbReference>
<dbReference type="Proteomes" id="UP000002519">
    <property type="component" value="Chromosome"/>
</dbReference>
<dbReference type="GO" id="GO:0005737">
    <property type="term" value="C:cytoplasm"/>
    <property type="evidence" value="ECO:0007669"/>
    <property type="project" value="UniProtKB-SubCell"/>
</dbReference>
<dbReference type="GO" id="GO:0008777">
    <property type="term" value="F:acetylornithine deacetylase activity"/>
    <property type="evidence" value="ECO:0007669"/>
    <property type="project" value="UniProtKB-UniRule"/>
</dbReference>
<dbReference type="GO" id="GO:0008270">
    <property type="term" value="F:zinc ion binding"/>
    <property type="evidence" value="ECO:0007669"/>
    <property type="project" value="UniProtKB-UniRule"/>
</dbReference>
<dbReference type="GO" id="GO:0006526">
    <property type="term" value="P:L-arginine biosynthetic process"/>
    <property type="evidence" value="ECO:0007669"/>
    <property type="project" value="UniProtKB-UniRule"/>
</dbReference>
<dbReference type="CDD" id="cd03894">
    <property type="entry name" value="M20_ArgE"/>
    <property type="match status" value="1"/>
</dbReference>
<dbReference type="FunFam" id="3.30.70.360:FF:000003">
    <property type="entry name" value="Acetylornithine deacetylase"/>
    <property type="match status" value="1"/>
</dbReference>
<dbReference type="Gene3D" id="3.30.70.360">
    <property type="match status" value="1"/>
</dbReference>
<dbReference type="Gene3D" id="3.40.630.10">
    <property type="entry name" value="Zn peptidases"/>
    <property type="match status" value="1"/>
</dbReference>
<dbReference type="HAMAP" id="MF_01108">
    <property type="entry name" value="ArgE"/>
    <property type="match status" value="1"/>
</dbReference>
<dbReference type="InterPro" id="IPR010169">
    <property type="entry name" value="AcOrn-deacetyl"/>
</dbReference>
<dbReference type="InterPro" id="IPR001261">
    <property type="entry name" value="ArgE/DapE_CS"/>
</dbReference>
<dbReference type="InterPro" id="IPR036264">
    <property type="entry name" value="Bact_exopeptidase_dim_dom"/>
</dbReference>
<dbReference type="InterPro" id="IPR002933">
    <property type="entry name" value="Peptidase_M20"/>
</dbReference>
<dbReference type="InterPro" id="IPR011650">
    <property type="entry name" value="Peptidase_M20_dimer"/>
</dbReference>
<dbReference type="InterPro" id="IPR050072">
    <property type="entry name" value="Peptidase_M20A"/>
</dbReference>
<dbReference type="NCBIfam" id="TIGR01892">
    <property type="entry name" value="AcOrn-deacetyl"/>
    <property type="match status" value="1"/>
</dbReference>
<dbReference type="NCBIfam" id="NF003474">
    <property type="entry name" value="PRK05111.1"/>
    <property type="match status" value="1"/>
</dbReference>
<dbReference type="PANTHER" id="PTHR43808">
    <property type="entry name" value="ACETYLORNITHINE DEACETYLASE"/>
    <property type="match status" value="1"/>
</dbReference>
<dbReference type="PANTHER" id="PTHR43808:SF1">
    <property type="entry name" value="ACETYLORNITHINE DEACETYLASE"/>
    <property type="match status" value="1"/>
</dbReference>
<dbReference type="Pfam" id="PF07687">
    <property type="entry name" value="M20_dimer"/>
    <property type="match status" value="1"/>
</dbReference>
<dbReference type="Pfam" id="PF01546">
    <property type="entry name" value="Peptidase_M20"/>
    <property type="match status" value="1"/>
</dbReference>
<dbReference type="SUPFAM" id="SSF55031">
    <property type="entry name" value="Bacterial exopeptidase dimerisation domain"/>
    <property type="match status" value="1"/>
</dbReference>
<dbReference type="SUPFAM" id="SSF53187">
    <property type="entry name" value="Zn-dependent exopeptidases"/>
    <property type="match status" value="1"/>
</dbReference>
<dbReference type="PROSITE" id="PS00758">
    <property type="entry name" value="ARGE_DAPE_CPG2_1"/>
    <property type="match status" value="1"/>
</dbReference>
<dbReference type="PROSITE" id="PS00759">
    <property type="entry name" value="ARGE_DAPE_CPG2_2"/>
    <property type="match status" value="1"/>
</dbReference>
<name>ARGE_ECO57</name>
<proteinExistence type="inferred from homology"/>
<reference key="1">
    <citation type="journal article" date="2001" name="Nature">
        <title>Genome sequence of enterohaemorrhagic Escherichia coli O157:H7.</title>
        <authorList>
            <person name="Perna N.T."/>
            <person name="Plunkett G. III"/>
            <person name="Burland V."/>
            <person name="Mau B."/>
            <person name="Glasner J.D."/>
            <person name="Rose D.J."/>
            <person name="Mayhew G.F."/>
            <person name="Evans P.S."/>
            <person name="Gregor J."/>
            <person name="Kirkpatrick H.A."/>
            <person name="Posfai G."/>
            <person name="Hackett J."/>
            <person name="Klink S."/>
            <person name="Boutin A."/>
            <person name="Shao Y."/>
            <person name="Miller L."/>
            <person name="Grotbeck E.J."/>
            <person name="Davis N.W."/>
            <person name="Lim A."/>
            <person name="Dimalanta E.T."/>
            <person name="Potamousis K."/>
            <person name="Apodaca J."/>
            <person name="Anantharaman T.S."/>
            <person name="Lin J."/>
            <person name="Yen G."/>
            <person name="Schwartz D.C."/>
            <person name="Welch R.A."/>
            <person name="Blattner F.R."/>
        </authorList>
    </citation>
    <scope>NUCLEOTIDE SEQUENCE [LARGE SCALE GENOMIC DNA]</scope>
    <source>
        <strain>O157:H7 / EDL933 / ATCC 700927 / EHEC</strain>
    </source>
</reference>
<reference key="2">
    <citation type="journal article" date="2001" name="DNA Res.">
        <title>Complete genome sequence of enterohemorrhagic Escherichia coli O157:H7 and genomic comparison with a laboratory strain K-12.</title>
        <authorList>
            <person name="Hayashi T."/>
            <person name="Makino K."/>
            <person name="Ohnishi M."/>
            <person name="Kurokawa K."/>
            <person name="Ishii K."/>
            <person name="Yokoyama K."/>
            <person name="Han C.-G."/>
            <person name="Ohtsubo E."/>
            <person name="Nakayama K."/>
            <person name="Murata T."/>
            <person name="Tanaka M."/>
            <person name="Tobe T."/>
            <person name="Iida T."/>
            <person name="Takami H."/>
            <person name="Honda T."/>
            <person name="Sasakawa C."/>
            <person name="Ogasawara N."/>
            <person name="Yasunaga T."/>
            <person name="Kuhara S."/>
            <person name="Shiba T."/>
            <person name="Hattori M."/>
            <person name="Shinagawa H."/>
        </authorList>
    </citation>
    <scope>NUCLEOTIDE SEQUENCE [LARGE SCALE GENOMIC DNA]</scope>
    <source>
        <strain>O157:H7 / Sakai / RIMD 0509952 / EHEC</strain>
    </source>
</reference>